<dbReference type="EMBL" id="DQ174691">
    <property type="protein sequence ID" value="AAZ95533.1"/>
    <property type="molecule type" value="Genomic_DNA"/>
</dbReference>
<dbReference type="RefSeq" id="WP_000584700.1">
    <property type="nucleotide sequence ID" value="NZ_VYQU01000016.1"/>
</dbReference>
<dbReference type="SMR" id="Q3S2Y1"/>
<dbReference type="CAZy" id="GT8">
    <property type="family name" value="Glycosyltransferase Family 8"/>
</dbReference>
<dbReference type="GeneID" id="66886244"/>
<dbReference type="PATRIC" id="fig|1311.132.peg.1279"/>
<dbReference type="UniPathway" id="UPA00378"/>
<dbReference type="GO" id="GO:0005886">
    <property type="term" value="C:plasma membrane"/>
    <property type="evidence" value="ECO:0007669"/>
    <property type="project" value="UniProtKB-SubCell"/>
</dbReference>
<dbReference type="GO" id="GO:0017122">
    <property type="term" value="C:protein N-acetylglucosaminyltransferase complex"/>
    <property type="evidence" value="ECO:0000314"/>
    <property type="project" value="UniProtKB"/>
</dbReference>
<dbReference type="GO" id="GO:0018242">
    <property type="term" value="P:protein O-linked glycosylation via serine"/>
    <property type="evidence" value="ECO:0007669"/>
    <property type="project" value="UniProtKB-UniRule"/>
</dbReference>
<dbReference type="GO" id="GO:0031647">
    <property type="term" value="P:regulation of protein stability"/>
    <property type="evidence" value="ECO:0000315"/>
    <property type="project" value="UniProtKB"/>
</dbReference>
<dbReference type="HAMAP" id="MF_01473">
    <property type="entry name" value="GtfB"/>
    <property type="match status" value="1"/>
</dbReference>
<dbReference type="InterPro" id="IPR014268">
    <property type="entry name" value="GtfB"/>
</dbReference>
<dbReference type="NCBIfam" id="TIGR02919">
    <property type="entry name" value="accessory Sec system glycosylation chaperone GtfB"/>
    <property type="match status" value="1"/>
</dbReference>
<feature type="chain" id="PRO_0000418641" description="UDP-N-acetylglucosamine--peptide N-acetylglucosaminyltransferase stabilizing protein GtfB">
    <location>
        <begin position="1"/>
        <end position="442"/>
    </location>
</feature>
<proteinExistence type="evidence at protein level"/>
<keyword id="KW-1003">Cell membrane</keyword>
<keyword id="KW-0472">Membrane</keyword>
<evidence type="ECO:0000255" key="1">
    <source>
        <dbReference type="HAMAP-Rule" id="MF_01473"/>
    </source>
</evidence>
<evidence type="ECO:0000269" key="2">
    <source>
    </source>
</evidence>
<evidence type="ECO:0000303" key="3">
    <source>
    </source>
</evidence>
<evidence type="ECO:0000305" key="4"/>
<reference key="1">
    <citation type="journal article" date="2006" name="Microbiology">
        <title>A unique serine-rich repeat protein (Srr-2) and novel surface antigen (epsilon) associated with a virulent lineage of serotype III Streptococcus agalactiae.</title>
        <authorList>
            <person name="Seifert K.N."/>
            <person name="Adderson E.E."/>
            <person name="Whiting A.A."/>
            <person name="Bohnsack J.F."/>
            <person name="Crowley P.J."/>
            <person name="Brady L.J."/>
        </authorList>
    </citation>
    <scope>NUCLEOTIDE SEQUENCE [GENOMIC DNA]</scope>
    <source>
        <strain>J48</strain>
    </source>
</reference>
<reference key="2">
    <citation type="journal article" date="2011" name="J. Biol. Chem.">
        <title>A molecular chaperone mediates a two-protein enzyme complex and glycosylation of serine-rich streptococcal adhesins.</title>
        <authorList>
            <person name="Wu R."/>
            <person name="Wu H."/>
        </authorList>
    </citation>
    <scope>FUNCTION AS A STABILIZING PROTEIN</scope>
    <scope>PATHWAY</scope>
    <scope>INTERACTION WITH GTFA (GTF1)</scope>
    <scope>EXPRESSION IN S.PARASANGUIS</scope>
    <scope>DISRUPTION PHENOTYPE</scope>
    <source>
        <strain>J48</strain>
    </source>
</reference>
<name>GTFB_STRAG</name>
<gene>
    <name evidence="1" type="primary">gtfB</name>
    <name evidence="3" type="synonym">gtf2</name>
</gene>
<organism>
    <name type="scientific">Streptococcus agalactiae</name>
    <dbReference type="NCBI Taxonomy" id="1311"/>
    <lineage>
        <taxon>Bacteria</taxon>
        <taxon>Bacillati</taxon>
        <taxon>Bacillota</taxon>
        <taxon>Bacilli</taxon>
        <taxon>Lactobacillales</taxon>
        <taxon>Streptococcaceae</taxon>
        <taxon>Streptococcus</taxon>
    </lineage>
</organism>
<comment type="function">
    <text evidence="2">Required for the polymorphic O-glycosylation of the serine-rich repeat protein Srr2. A stabilizing protein that is part of the accessory SecA2/SecY2 system specifically required to export serine-rich repeat proteins, probably Srr2 in this organism. The GtfA-GtfB (Gtf1-Gtf2 in this bacteria) complex adds GlcNAc from UDP-GlcNAc to Srr2 substrate, attaching the first sugar residue. Stabilizes the glycosylation activity of GtfA in vivo. Upon expression in a gtfB deletion mutant of S.parasanguis, GtfB confers incorrect glycosylation and partial complementation of a biofilm formation defect, while GtfA/GtfB restores correct expression of serine-rich repeat protein Fap1 and completely restores a biofilm formation defect in a S.parasanguis double gtfA-gtfB deletion.</text>
</comment>
<comment type="pathway">
    <text evidence="1 2">Protein modification; protein glycosylation.</text>
</comment>
<comment type="subunit">
    <text evidence="1 2">Interacts with glycosyltransferase GtfA (Gtf1) (PubMed:21862581). Interacts with glycosyltransferase GtfA; probably forms a heterotetramer with 2 subunits each of GtfA and GtfB. Part of the accessory SecA2/SecY2 protein translocation apparatus.</text>
</comment>
<comment type="subcellular location">
    <subcellularLocation>
        <location evidence="1">Cell membrane</location>
        <topology evidence="1">Peripheral membrane protein</topology>
    </subcellularLocation>
</comment>
<comment type="disruption phenotype">
    <text evidence="2">No glycosylation of serine-rich repeat protein Srr-2.</text>
</comment>
<comment type="similarity">
    <text evidence="4">Belongs to the GtfB family.</text>
</comment>
<accession>Q3S2Y1</accession>
<protein>
    <recommendedName>
        <fullName evidence="1">UDP-N-acetylglucosamine--peptide N-acetylglucosaminyltransferase stabilizing protein GtfB</fullName>
    </recommendedName>
    <alternativeName>
        <fullName>Glycosyltransferase chaperone Gtf2</fullName>
    </alternativeName>
    <alternativeName>
        <fullName evidence="1">Glycosyltransferase stabilizing protein GtfB</fullName>
    </alternativeName>
    <alternativeName>
        <fullName evidence="3">Glycosyltransferase-stabilizing protein Gtf2</fullName>
    </alternativeName>
</protein>
<sequence>MIILFDFFDKKSKDLYYSLITSGLHGNAVVINDDGFLPQNINSPYSFFCNMEGKNGNPLYFNQVPLPDLWEIKGNNIEAEIWDFSIKRAKIFYQEPKYKRQVKNIDWFDNNKKVRYTDHYNRFGWCFARTHFDKNQNVTTKSYFDKDGKEVIVENFRTGVIILNWLNKDYFFDNRVAFLNFYFSLMGWNLSRIWYNSLSTPFFVSYRMTYPGEDILFWQEDIEDTIPANMRVLLESTNTRTQKVIVQKKNTYHKIKSMLPKEQQEKIGYLGFIYPNKKNNKGRKDIFILTNSDQIEHLEVLVHHLSDYHFHIAAYTEMSFKLMSFSQEQNVTLYPNISRTDLDNLFEICDIYFDINHGNEVDDVIRRAFEYNHLIFAFDNTCHNRELVLDSNIISHTTCEQLINLMKNLSGSIMYLLEQQREQTSNETKERYKEILGGYGNA</sequence>